<evidence type="ECO:0000255" key="1">
    <source>
        <dbReference type="HAMAP-Rule" id="MF_00501"/>
    </source>
</evidence>
<evidence type="ECO:0000305" key="2"/>
<dbReference type="EMBL" id="CP000860">
    <property type="protein sequence ID" value="ACA60643.1"/>
    <property type="molecule type" value="Genomic_DNA"/>
</dbReference>
<dbReference type="RefSeq" id="WP_012303218.1">
    <property type="nucleotide sequence ID" value="NC_010424.1"/>
</dbReference>
<dbReference type="SMR" id="B1I6L4"/>
<dbReference type="STRING" id="477974.Daud_2156"/>
<dbReference type="KEGG" id="dau:Daud_2156"/>
<dbReference type="eggNOG" id="COG0254">
    <property type="taxonomic scope" value="Bacteria"/>
</dbReference>
<dbReference type="HOGENOM" id="CLU_114306_4_3_9"/>
<dbReference type="OrthoDB" id="9803251at2"/>
<dbReference type="Proteomes" id="UP000008544">
    <property type="component" value="Chromosome"/>
</dbReference>
<dbReference type="GO" id="GO:1990904">
    <property type="term" value="C:ribonucleoprotein complex"/>
    <property type="evidence" value="ECO:0007669"/>
    <property type="project" value="UniProtKB-KW"/>
</dbReference>
<dbReference type="GO" id="GO:0005840">
    <property type="term" value="C:ribosome"/>
    <property type="evidence" value="ECO:0007669"/>
    <property type="project" value="UniProtKB-KW"/>
</dbReference>
<dbReference type="GO" id="GO:0046872">
    <property type="term" value="F:metal ion binding"/>
    <property type="evidence" value="ECO:0007669"/>
    <property type="project" value="UniProtKB-KW"/>
</dbReference>
<dbReference type="GO" id="GO:0019843">
    <property type="term" value="F:rRNA binding"/>
    <property type="evidence" value="ECO:0007669"/>
    <property type="project" value="UniProtKB-KW"/>
</dbReference>
<dbReference type="GO" id="GO:0003735">
    <property type="term" value="F:structural constituent of ribosome"/>
    <property type="evidence" value="ECO:0007669"/>
    <property type="project" value="InterPro"/>
</dbReference>
<dbReference type="GO" id="GO:0006412">
    <property type="term" value="P:translation"/>
    <property type="evidence" value="ECO:0007669"/>
    <property type="project" value="UniProtKB-UniRule"/>
</dbReference>
<dbReference type="Gene3D" id="4.10.830.30">
    <property type="entry name" value="Ribosomal protein L31"/>
    <property type="match status" value="1"/>
</dbReference>
<dbReference type="HAMAP" id="MF_00501">
    <property type="entry name" value="Ribosomal_bL31_1"/>
    <property type="match status" value="1"/>
</dbReference>
<dbReference type="InterPro" id="IPR034704">
    <property type="entry name" value="Ribosomal_bL28/bL31-like_sf"/>
</dbReference>
<dbReference type="InterPro" id="IPR002150">
    <property type="entry name" value="Ribosomal_bL31"/>
</dbReference>
<dbReference type="InterPro" id="IPR027491">
    <property type="entry name" value="Ribosomal_bL31_A"/>
</dbReference>
<dbReference type="InterPro" id="IPR042105">
    <property type="entry name" value="Ribosomal_bL31_sf"/>
</dbReference>
<dbReference type="NCBIfam" id="TIGR00105">
    <property type="entry name" value="L31"/>
    <property type="match status" value="1"/>
</dbReference>
<dbReference type="NCBIfam" id="NF000612">
    <property type="entry name" value="PRK00019.1"/>
    <property type="match status" value="1"/>
</dbReference>
<dbReference type="PANTHER" id="PTHR33280">
    <property type="entry name" value="50S RIBOSOMAL PROTEIN L31, CHLOROPLASTIC"/>
    <property type="match status" value="1"/>
</dbReference>
<dbReference type="PANTHER" id="PTHR33280:SF1">
    <property type="entry name" value="LARGE RIBOSOMAL SUBUNIT PROTEIN BL31C"/>
    <property type="match status" value="1"/>
</dbReference>
<dbReference type="Pfam" id="PF01197">
    <property type="entry name" value="Ribosomal_L31"/>
    <property type="match status" value="1"/>
</dbReference>
<dbReference type="PRINTS" id="PR01249">
    <property type="entry name" value="RIBOSOMALL31"/>
</dbReference>
<dbReference type="SUPFAM" id="SSF143800">
    <property type="entry name" value="L28p-like"/>
    <property type="match status" value="1"/>
</dbReference>
<dbReference type="PROSITE" id="PS01143">
    <property type="entry name" value="RIBOSOMAL_L31"/>
    <property type="match status" value="1"/>
</dbReference>
<proteinExistence type="inferred from homology"/>
<reference key="1">
    <citation type="submission" date="2007-10" db="EMBL/GenBank/DDBJ databases">
        <title>Complete sequence of chromosome of Desulforudis audaxviator MP104C.</title>
        <authorList>
            <person name="Copeland A."/>
            <person name="Lucas S."/>
            <person name="Lapidus A."/>
            <person name="Barry K."/>
            <person name="Glavina del Rio T."/>
            <person name="Dalin E."/>
            <person name="Tice H."/>
            <person name="Bruce D."/>
            <person name="Pitluck S."/>
            <person name="Lowry S.R."/>
            <person name="Larimer F."/>
            <person name="Land M.L."/>
            <person name="Hauser L."/>
            <person name="Kyrpides N."/>
            <person name="Ivanova N.N."/>
            <person name="Richardson P."/>
        </authorList>
    </citation>
    <scope>NUCLEOTIDE SEQUENCE [LARGE SCALE GENOMIC DNA]</scope>
    <source>
        <strain>MP104C</strain>
    </source>
</reference>
<protein>
    <recommendedName>
        <fullName evidence="1">Large ribosomal subunit protein bL31</fullName>
    </recommendedName>
    <alternativeName>
        <fullName evidence="2">50S ribosomal protein L31</fullName>
    </alternativeName>
</protein>
<comment type="function">
    <text evidence="1">Binds the 23S rRNA.</text>
</comment>
<comment type="cofactor">
    <cofactor evidence="1">
        <name>Zn(2+)</name>
        <dbReference type="ChEBI" id="CHEBI:29105"/>
    </cofactor>
    <text evidence="1">Binds 1 zinc ion per subunit.</text>
</comment>
<comment type="subunit">
    <text evidence="1">Part of the 50S ribosomal subunit.</text>
</comment>
<comment type="similarity">
    <text evidence="1">Belongs to the bacterial ribosomal protein bL31 family. Type A subfamily.</text>
</comment>
<name>RL31_DESAP</name>
<sequence length="67" mass="7755">MKEKLHPAYQKARIVCVCGAQFEVGSTKKEMRVDICSKCHPFYTGMQRTVETRGRADKFRRKYGLGK</sequence>
<accession>B1I6L4</accession>
<feature type="chain" id="PRO_1000126604" description="Large ribosomal subunit protein bL31">
    <location>
        <begin position="1"/>
        <end position="67"/>
    </location>
</feature>
<feature type="binding site" evidence="1">
    <location>
        <position position="16"/>
    </location>
    <ligand>
        <name>Zn(2+)</name>
        <dbReference type="ChEBI" id="CHEBI:29105"/>
    </ligand>
</feature>
<feature type="binding site" evidence="1">
    <location>
        <position position="18"/>
    </location>
    <ligand>
        <name>Zn(2+)</name>
        <dbReference type="ChEBI" id="CHEBI:29105"/>
    </ligand>
</feature>
<feature type="binding site" evidence="1">
    <location>
        <position position="36"/>
    </location>
    <ligand>
        <name>Zn(2+)</name>
        <dbReference type="ChEBI" id="CHEBI:29105"/>
    </ligand>
</feature>
<feature type="binding site" evidence="1">
    <location>
        <position position="39"/>
    </location>
    <ligand>
        <name>Zn(2+)</name>
        <dbReference type="ChEBI" id="CHEBI:29105"/>
    </ligand>
</feature>
<gene>
    <name evidence="1" type="primary">rpmE</name>
    <name type="ordered locus">Daud_2156</name>
</gene>
<organism>
    <name type="scientific">Desulforudis audaxviator (strain MP104C)</name>
    <dbReference type="NCBI Taxonomy" id="477974"/>
    <lineage>
        <taxon>Bacteria</taxon>
        <taxon>Bacillati</taxon>
        <taxon>Bacillota</taxon>
        <taxon>Clostridia</taxon>
        <taxon>Thermoanaerobacterales</taxon>
        <taxon>Candidatus Desulforudaceae</taxon>
        <taxon>Candidatus Desulforudis</taxon>
    </lineage>
</organism>
<keyword id="KW-0479">Metal-binding</keyword>
<keyword id="KW-1185">Reference proteome</keyword>
<keyword id="KW-0687">Ribonucleoprotein</keyword>
<keyword id="KW-0689">Ribosomal protein</keyword>
<keyword id="KW-0694">RNA-binding</keyword>
<keyword id="KW-0699">rRNA-binding</keyword>
<keyword id="KW-0862">Zinc</keyword>